<reference key="1">
    <citation type="journal article" date="2001" name="J. Biol. Chem.">
        <title>Structural compensation for the deficit of rRNA with proteins in the mammalian mitochondrial ribosome. Systematic analysis of protein components of the large ribosomal subunit from mammalian mitochondria.</title>
        <authorList>
            <person name="Suzuki T."/>
            <person name="Terasaki M."/>
            <person name="Takemoto-Hori C."/>
            <person name="Hanada T."/>
            <person name="Ueda T."/>
            <person name="Wada A."/>
            <person name="Watanabe K."/>
        </authorList>
    </citation>
    <scope>NUCLEOTIDE SEQUENCE [MRNA]</scope>
</reference>
<reference key="2">
    <citation type="journal article" date="2005" name="Science">
        <title>The transcriptional landscape of the mammalian genome.</title>
        <authorList>
            <person name="Carninci P."/>
            <person name="Kasukawa T."/>
            <person name="Katayama S."/>
            <person name="Gough J."/>
            <person name="Frith M.C."/>
            <person name="Maeda N."/>
            <person name="Oyama R."/>
            <person name="Ravasi T."/>
            <person name="Lenhard B."/>
            <person name="Wells C."/>
            <person name="Kodzius R."/>
            <person name="Shimokawa K."/>
            <person name="Bajic V.B."/>
            <person name="Brenner S.E."/>
            <person name="Batalov S."/>
            <person name="Forrest A.R."/>
            <person name="Zavolan M."/>
            <person name="Davis M.J."/>
            <person name="Wilming L.G."/>
            <person name="Aidinis V."/>
            <person name="Allen J.E."/>
            <person name="Ambesi-Impiombato A."/>
            <person name="Apweiler R."/>
            <person name="Aturaliya R.N."/>
            <person name="Bailey T.L."/>
            <person name="Bansal M."/>
            <person name="Baxter L."/>
            <person name="Beisel K.W."/>
            <person name="Bersano T."/>
            <person name="Bono H."/>
            <person name="Chalk A.M."/>
            <person name="Chiu K.P."/>
            <person name="Choudhary V."/>
            <person name="Christoffels A."/>
            <person name="Clutterbuck D.R."/>
            <person name="Crowe M.L."/>
            <person name="Dalla E."/>
            <person name="Dalrymple B.P."/>
            <person name="de Bono B."/>
            <person name="Della Gatta G."/>
            <person name="di Bernardo D."/>
            <person name="Down T."/>
            <person name="Engstrom P."/>
            <person name="Fagiolini M."/>
            <person name="Faulkner G."/>
            <person name="Fletcher C.F."/>
            <person name="Fukushima T."/>
            <person name="Furuno M."/>
            <person name="Futaki S."/>
            <person name="Gariboldi M."/>
            <person name="Georgii-Hemming P."/>
            <person name="Gingeras T.R."/>
            <person name="Gojobori T."/>
            <person name="Green R.E."/>
            <person name="Gustincich S."/>
            <person name="Harbers M."/>
            <person name="Hayashi Y."/>
            <person name="Hensch T.K."/>
            <person name="Hirokawa N."/>
            <person name="Hill D."/>
            <person name="Huminiecki L."/>
            <person name="Iacono M."/>
            <person name="Ikeo K."/>
            <person name="Iwama A."/>
            <person name="Ishikawa T."/>
            <person name="Jakt M."/>
            <person name="Kanapin A."/>
            <person name="Katoh M."/>
            <person name="Kawasawa Y."/>
            <person name="Kelso J."/>
            <person name="Kitamura H."/>
            <person name="Kitano H."/>
            <person name="Kollias G."/>
            <person name="Krishnan S.P."/>
            <person name="Kruger A."/>
            <person name="Kummerfeld S.K."/>
            <person name="Kurochkin I.V."/>
            <person name="Lareau L.F."/>
            <person name="Lazarevic D."/>
            <person name="Lipovich L."/>
            <person name="Liu J."/>
            <person name="Liuni S."/>
            <person name="McWilliam S."/>
            <person name="Madan Babu M."/>
            <person name="Madera M."/>
            <person name="Marchionni L."/>
            <person name="Matsuda H."/>
            <person name="Matsuzawa S."/>
            <person name="Miki H."/>
            <person name="Mignone F."/>
            <person name="Miyake S."/>
            <person name="Morris K."/>
            <person name="Mottagui-Tabar S."/>
            <person name="Mulder N."/>
            <person name="Nakano N."/>
            <person name="Nakauchi H."/>
            <person name="Ng P."/>
            <person name="Nilsson R."/>
            <person name="Nishiguchi S."/>
            <person name="Nishikawa S."/>
            <person name="Nori F."/>
            <person name="Ohara O."/>
            <person name="Okazaki Y."/>
            <person name="Orlando V."/>
            <person name="Pang K.C."/>
            <person name="Pavan W.J."/>
            <person name="Pavesi G."/>
            <person name="Pesole G."/>
            <person name="Petrovsky N."/>
            <person name="Piazza S."/>
            <person name="Reed J."/>
            <person name="Reid J.F."/>
            <person name="Ring B.Z."/>
            <person name="Ringwald M."/>
            <person name="Rost B."/>
            <person name="Ruan Y."/>
            <person name="Salzberg S.L."/>
            <person name="Sandelin A."/>
            <person name="Schneider C."/>
            <person name="Schoenbach C."/>
            <person name="Sekiguchi K."/>
            <person name="Semple C.A."/>
            <person name="Seno S."/>
            <person name="Sessa L."/>
            <person name="Sheng Y."/>
            <person name="Shibata Y."/>
            <person name="Shimada H."/>
            <person name="Shimada K."/>
            <person name="Silva D."/>
            <person name="Sinclair B."/>
            <person name="Sperling S."/>
            <person name="Stupka E."/>
            <person name="Sugiura K."/>
            <person name="Sultana R."/>
            <person name="Takenaka Y."/>
            <person name="Taki K."/>
            <person name="Tammoja K."/>
            <person name="Tan S.L."/>
            <person name="Tang S."/>
            <person name="Taylor M.S."/>
            <person name="Tegner J."/>
            <person name="Teichmann S.A."/>
            <person name="Ueda H.R."/>
            <person name="van Nimwegen E."/>
            <person name="Verardo R."/>
            <person name="Wei C.L."/>
            <person name="Yagi K."/>
            <person name="Yamanishi H."/>
            <person name="Zabarovsky E."/>
            <person name="Zhu S."/>
            <person name="Zimmer A."/>
            <person name="Hide W."/>
            <person name="Bult C."/>
            <person name="Grimmond S.M."/>
            <person name="Teasdale R.D."/>
            <person name="Liu E.T."/>
            <person name="Brusic V."/>
            <person name="Quackenbush J."/>
            <person name="Wahlestedt C."/>
            <person name="Mattick J.S."/>
            <person name="Hume D.A."/>
            <person name="Kai C."/>
            <person name="Sasaki D."/>
            <person name="Tomaru Y."/>
            <person name="Fukuda S."/>
            <person name="Kanamori-Katayama M."/>
            <person name="Suzuki M."/>
            <person name="Aoki J."/>
            <person name="Arakawa T."/>
            <person name="Iida J."/>
            <person name="Imamura K."/>
            <person name="Itoh M."/>
            <person name="Kato T."/>
            <person name="Kawaji H."/>
            <person name="Kawagashira N."/>
            <person name="Kawashima T."/>
            <person name="Kojima M."/>
            <person name="Kondo S."/>
            <person name="Konno H."/>
            <person name="Nakano K."/>
            <person name="Ninomiya N."/>
            <person name="Nishio T."/>
            <person name="Okada M."/>
            <person name="Plessy C."/>
            <person name="Shibata K."/>
            <person name="Shiraki T."/>
            <person name="Suzuki S."/>
            <person name="Tagami M."/>
            <person name="Waki K."/>
            <person name="Watahiki A."/>
            <person name="Okamura-Oho Y."/>
            <person name="Suzuki H."/>
            <person name="Kawai J."/>
            <person name="Hayashizaki Y."/>
        </authorList>
    </citation>
    <scope>NUCLEOTIDE SEQUENCE [LARGE SCALE MRNA]</scope>
</reference>
<reference key="3">
    <citation type="journal article" date="2004" name="Genome Res.">
        <title>The status, quality, and expansion of the NIH full-length cDNA project: the Mammalian Gene Collection (MGC).</title>
        <authorList>
            <consortium name="The MGC Project Team"/>
        </authorList>
    </citation>
    <scope>NUCLEOTIDE SEQUENCE [LARGE SCALE MRNA]</scope>
    <source>
        <strain>FVB/N</strain>
        <tissue>Colon</tissue>
    </source>
</reference>
<reference key="4">
    <citation type="journal article" date="2010" name="Cell">
        <title>A tissue-specific atlas of mouse protein phosphorylation and expression.</title>
        <authorList>
            <person name="Huttlin E.L."/>
            <person name="Jedrychowski M.P."/>
            <person name="Elias J.E."/>
            <person name="Goswami T."/>
            <person name="Rad R."/>
            <person name="Beausoleil S.A."/>
            <person name="Villen J."/>
            <person name="Haas W."/>
            <person name="Sowa M.E."/>
            <person name="Gygi S.P."/>
        </authorList>
    </citation>
    <scope>IDENTIFICATION BY MASS SPECTROMETRY [LARGE SCALE ANALYSIS]</scope>
    <source>
        <tissue>Brain</tissue>
        <tissue>Brown adipose tissue</tissue>
        <tissue>Heart</tissue>
        <tissue>Kidney</tissue>
        <tissue>Liver</tissue>
        <tissue>Spleen</tissue>
    </source>
</reference>
<organism>
    <name type="scientific">Mus musculus</name>
    <name type="common">Mouse</name>
    <dbReference type="NCBI Taxonomy" id="10090"/>
    <lineage>
        <taxon>Eukaryota</taxon>
        <taxon>Metazoa</taxon>
        <taxon>Chordata</taxon>
        <taxon>Craniata</taxon>
        <taxon>Vertebrata</taxon>
        <taxon>Euteleostomi</taxon>
        <taxon>Mammalia</taxon>
        <taxon>Eutheria</taxon>
        <taxon>Euarchontoglires</taxon>
        <taxon>Glires</taxon>
        <taxon>Rodentia</taxon>
        <taxon>Myomorpha</taxon>
        <taxon>Muroidea</taxon>
        <taxon>Muridae</taxon>
        <taxon>Murinae</taxon>
        <taxon>Mus</taxon>
        <taxon>Mus</taxon>
    </lineage>
</organism>
<sequence>MWRLLTRVPAPLLRMHFSDSWAALPTSAGLKTLLPVPTFENVSIPERSKLKFVERVPLVPKVRREPKNLKDIRGPSTEATDFTEGNFAILALGGGYLHWGHFEMMRLTINRFMDPKNMFAIWRVPAPFKPITRKGVGQRMGGGKGAIDHYVTPVKTGCLVVEMGGRCEFEEVKGILNQVAHKLPFPAKAVSRKTLERMHQNQRERELNNQNPWTFEHIATANMFGIRKFLSPYDLTQKGRYWGKFYMPKRV</sequence>
<keyword id="KW-0496">Mitochondrion</keyword>
<keyword id="KW-1185">Reference proteome</keyword>
<keyword id="KW-0687">Ribonucleoprotein</keyword>
<keyword id="KW-0689">Ribosomal protein</keyword>
<keyword id="KW-0809">Transit peptide</keyword>
<proteinExistence type="evidence at protein level"/>
<accession>Q99N93</accession>
<comment type="subunit">
    <text evidence="2">Component of the mitochondrial ribosome large subunit (39S) which comprises a 16S rRNA and about 50 distinct proteins.</text>
</comment>
<comment type="subcellular location">
    <subcellularLocation>
        <location evidence="2">Mitochondrion</location>
    </subcellularLocation>
</comment>
<comment type="similarity">
    <text evidence="3">Belongs to the universal ribosomal protein uL16 family.</text>
</comment>
<evidence type="ECO:0000250" key="1">
    <source>
        <dbReference type="UniProtKB" id="Q3T0J3"/>
    </source>
</evidence>
<evidence type="ECO:0000250" key="2">
    <source>
        <dbReference type="UniProtKB" id="Q9NX20"/>
    </source>
</evidence>
<evidence type="ECO:0000305" key="3"/>
<feature type="transit peptide" description="Mitochondrion" evidence="1">
    <location>
        <begin position="1"/>
        <end position="29"/>
    </location>
</feature>
<feature type="chain" id="PRO_0000239842" description="Large ribosomal subunit protein uL16m">
    <location>
        <begin position="30"/>
        <end position="251"/>
    </location>
</feature>
<dbReference type="EMBL" id="AB049643">
    <property type="protein sequence ID" value="BAB40848.1"/>
    <property type="molecule type" value="mRNA"/>
</dbReference>
<dbReference type="EMBL" id="AK165616">
    <property type="protein sequence ID" value="BAE38296.1"/>
    <property type="molecule type" value="mRNA"/>
</dbReference>
<dbReference type="EMBL" id="BC044721">
    <property type="protein sequence ID" value="AAH44721.1"/>
    <property type="molecule type" value="mRNA"/>
</dbReference>
<dbReference type="CCDS" id="CCDS29610.1"/>
<dbReference type="RefSeq" id="NP_079882.2">
    <property type="nucleotide sequence ID" value="NM_025606.3"/>
</dbReference>
<dbReference type="SMR" id="Q99N93"/>
<dbReference type="BioGRID" id="220435">
    <property type="interactions" value="25"/>
</dbReference>
<dbReference type="ComplexPortal" id="CPX-5302">
    <property type="entry name" value="39S mitochondrial large ribosomal subunit"/>
</dbReference>
<dbReference type="FunCoup" id="Q99N93">
    <property type="interactions" value="1280"/>
</dbReference>
<dbReference type="STRING" id="10090.ENSMUSP00000128915"/>
<dbReference type="iPTMnet" id="Q99N93"/>
<dbReference type="PhosphoSitePlus" id="Q99N93"/>
<dbReference type="jPOST" id="Q99N93"/>
<dbReference type="PaxDb" id="10090-ENSMUSP00000128915"/>
<dbReference type="PeptideAtlas" id="Q99N93"/>
<dbReference type="ProteomicsDB" id="299829"/>
<dbReference type="Pumba" id="Q99N93"/>
<dbReference type="Antibodypedia" id="52764">
    <property type="antibodies" value="109 antibodies from 20 providers"/>
</dbReference>
<dbReference type="DNASU" id="94063"/>
<dbReference type="Ensembl" id="ENSMUST00000167199.3">
    <property type="protein sequence ID" value="ENSMUSP00000128915.2"/>
    <property type="gene ID" value="ENSMUSG00000024683.7"/>
</dbReference>
<dbReference type="GeneID" id="94063"/>
<dbReference type="KEGG" id="mmu:94063"/>
<dbReference type="UCSC" id="uc008gsx.1">
    <property type="organism name" value="mouse"/>
</dbReference>
<dbReference type="AGR" id="MGI:2137219"/>
<dbReference type="CTD" id="54948"/>
<dbReference type="MGI" id="MGI:2137219">
    <property type="gene designation" value="Mrpl16"/>
</dbReference>
<dbReference type="VEuPathDB" id="HostDB:ENSMUSG00000024683"/>
<dbReference type="eggNOG" id="KOG3422">
    <property type="taxonomic scope" value="Eukaryota"/>
</dbReference>
<dbReference type="GeneTree" id="ENSGT00390000002038"/>
<dbReference type="HOGENOM" id="CLU_096518_0_0_1"/>
<dbReference type="InParanoid" id="Q99N93"/>
<dbReference type="OMA" id="WGHMEMM"/>
<dbReference type="OrthoDB" id="268521at2759"/>
<dbReference type="PhylomeDB" id="Q99N93"/>
<dbReference type="TreeFam" id="TF312969"/>
<dbReference type="Reactome" id="R-MMU-5389840">
    <property type="pathway name" value="Mitochondrial translation elongation"/>
</dbReference>
<dbReference type="Reactome" id="R-MMU-5419276">
    <property type="pathway name" value="Mitochondrial translation termination"/>
</dbReference>
<dbReference type="BioGRID-ORCS" id="94063">
    <property type="hits" value="18 hits in 78 CRISPR screens"/>
</dbReference>
<dbReference type="ChiTaRS" id="Mrpl16">
    <property type="organism name" value="mouse"/>
</dbReference>
<dbReference type="PRO" id="PR:Q99N93"/>
<dbReference type="Proteomes" id="UP000000589">
    <property type="component" value="Chromosome 19"/>
</dbReference>
<dbReference type="RNAct" id="Q99N93">
    <property type="molecule type" value="protein"/>
</dbReference>
<dbReference type="Bgee" id="ENSMUSG00000024683">
    <property type="expression patterns" value="Expressed in heart right ventricle and 265 other cell types or tissues"/>
</dbReference>
<dbReference type="GO" id="GO:0005743">
    <property type="term" value="C:mitochondrial inner membrane"/>
    <property type="evidence" value="ECO:0000303"/>
    <property type="project" value="ComplexPortal"/>
</dbReference>
<dbReference type="GO" id="GO:0005762">
    <property type="term" value="C:mitochondrial large ribosomal subunit"/>
    <property type="evidence" value="ECO:0000250"/>
    <property type="project" value="UniProtKB"/>
</dbReference>
<dbReference type="GO" id="GO:0005739">
    <property type="term" value="C:mitochondrion"/>
    <property type="evidence" value="ECO:0007005"/>
    <property type="project" value="MGI"/>
</dbReference>
<dbReference type="GO" id="GO:0019843">
    <property type="term" value="F:rRNA binding"/>
    <property type="evidence" value="ECO:0007669"/>
    <property type="project" value="InterPro"/>
</dbReference>
<dbReference type="GO" id="GO:0003735">
    <property type="term" value="F:structural constituent of ribosome"/>
    <property type="evidence" value="ECO:0000266"/>
    <property type="project" value="MGI"/>
</dbReference>
<dbReference type="GO" id="GO:0032543">
    <property type="term" value="P:mitochondrial translation"/>
    <property type="evidence" value="ECO:0000303"/>
    <property type="project" value="ComplexPortal"/>
</dbReference>
<dbReference type="GO" id="GO:0006412">
    <property type="term" value="P:translation"/>
    <property type="evidence" value="ECO:0000266"/>
    <property type="project" value="MGI"/>
</dbReference>
<dbReference type="CDD" id="cd01433">
    <property type="entry name" value="Ribosomal_L16_L10e"/>
    <property type="match status" value="1"/>
</dbReference>
<dbReference type="FunFam" id="3.90.1170.10:FF:000005">
    <property type="entry name" value="39S ribosomal protein L16, mitochondrial"/>
    <property type="match status" value="1"/>
</dbReference>
<dbReference type="Gene3D" id="3.90.1170.10">
    <property type="entry name" value="Ribosomal protein L10e/L16"/>
    <property type="match status" value="1"/>
</dbReference>
<dbReference type="InterPro" id="IPR047873">
    <property type="entry name" value="Ribosomal_uL16"/>
</dbReference>
<dbReference type="InterPro" id="IPR000114">
    <property type="entry name" value="Ribosomal_uL16_bact-type"/>
</dbReference>
<dbReference type="InterPro" id="IPR016180">
    <property type="entry name" value="Ribosomal_uL16_dom"/>
</dbReference>
<dbReference type="InterPro" id="IPR036920">
    <property type="entry name" value="Ribosomal_uL16_sf"/>
</dbReference>
<dbReference type="PANTHER" id="PTHR12220">
    <property type="entry name" value="50S/60S RIBOSOMAL PROTEIN L16"/>
    <property type="match status" value="1"/>
</dbReference>
<dbReference type="PANTHER" id="PTHR12220:SF13">
    <property type="entry name" value="LARGE RIBOSOMAL SUBUNIT PROTEIN UL16M"/>
    <property type="match status" value="1"/>
</dbReference>
<dbReference type="Pfam" id="PF00252">
    <property type="entry name" value="Ribosomal_L16"/>
    <property type="match status" value="1"/>
</dbReference>
<dbReference type="PRINTS" id="PR00060">
    <property type="entry name" value="RIBOSOMALL16"/>
</dbReference>
<dbReference type="SUPFAM" id="SSF54686">
    <property type="entry name" value="Ribosomal protein L16p/L10e"/>
    <property type="match status" value="1"/>
</dbReference>
<protein>
    <recommendedName>
        <fullName evidence="3">Large ribosomal subunit protein uL16m</fullName>
    </recommendedName>
    <alternativeName>
        <fullName>39S ribosomal protein L16, mitochondrial</fullName>
        <shortName>L16mt</shortName>
        <shortName>MRP-L16</shortName>
    </alternativeName>
</protein>
<gene>
    <name type="primary">Mrpl16</name>
</gene>
<name>RM16_MOUSE</name>